<dbReference type="EMBL" id="M37218">
    <property type="protein sequence ID" value="AAA98158.1"/>
    <property type="molecule type" value="Genomic_DNA"/>
</dbReference>
<dbReference type="PIR" id="S10921">
    <property type="entry name" value="S10921"/>
</dbReference>
<dbReference type="RefSeq" id="WP_001329514.1">
    <property type="nucleotide sequence ID" value="NZ_UIQD01000202.1"/>
</dbReference>
<dbReference type="SMR" id="P21185"/>
<dbReference type="GO" id="GO:0009279">
    <property type="term" value="C:cell outer membrane"/>
    <property type="evidence" value="ECO:0007669"/>
    <property type="project" value="UniProtKB-SubCell"/>
</dbReference>
<dbReference type="GO" id="GO:0019835">
    <property type="term" value="P:cytolysis"/>
    <property type="evidence" value="ECO:0007669"/>
    <property type="project" value="InterPro"/>
</dbReference>
<dbReference type="InterPro" id="IPR003059">
    <property type="entry name" value="Lysis_col"/>
</dbReference>
<dbReference type="Pfam" id="PF02402">
    <property type="entry name" value="Lysis_col"/>
    <property type="match status" value="1"/>
</dbReference>
<dbReference type="PRINTS" id="PR01297">
    <property type="entry name" value="LYSISCOLICIN"/>
</dbReference>
<dbReference type="PROSITE" id="PS51257">
    <property type="entry name" value="PROKAR_LIPOPROTEIN"/>
    <property type="match status" value="1"/>
</dbReference>
<keyword id="KW-0998">Cell outer membrane</keyword>
<keyword id="KW-0449">Lipoprotein</keyword>
<keyword id="KW-0472">Membrane</keyword>
<keyword id="KW-0564">Palmitate</keyword>
<keyword id="KW-0614">Plasmid</keyword>
<keyword id="KW-0732">Signal</keyword>
<organism>
    <name type="scientific">Shigella sonnei</name>
    <dbReference type="NCBI Taxonomy" id="624"/>
    <lineage>
        <taxon>Bacteria</taxon>
        <taxon>Pseudomonadati</taxon>
        <taxon>Pseudomonadota</taxon>
        <taxon>Gammaproteobacteria</taxon>
        <taxon>Enterobacterales</taxon>
        <taxon>Enterobacteriaceae</taxon>
        <taxon>Shigella</taxon>
    </lineage>
</organism>
<evidence type="ECO:0000255" key="1">
    <source>
        <dbReference type="PROSITE-ProRule" id="PRU00303"/>
    </source>
</evidence>
<evidence type="ECO:0000305" key="2"/>
<proteinExistence type="inferred from homology"/>
<sequence>MRKRFFVGIFAINLLVGCQANYIRDVQGGTVAPSSSSKLTGISVQ</sequence>
<name>LYS3_SHISO</name>
<geneLocation type="plasmid">
    <name>pKY-1</name>
</geneLocation>
<feature type="signal peptide" evidence="1">
    <location>
        <begin position="1"/>
        <end position="17"/>
    </location>
</feature>
<feature type="chain" id="PRO_0000005683" description="Lysis protein for colicin E1*">
    <location>
        <begin position="18"/>
        <end position="45"/>
    </location>
</feature>
<feature type="lipid moiety-binding region" description="N-palmitoyl cysteine" evidence="1">
    <location>
        <position position="18"/>
    </location>
</feature>
<feature type="lipid moiety-binding region" description="S-diacylglycerol cysteine" evidence="1">
    <location>
        <position position="18"/>
    </location>
</feature>
<accession>P21185</accession>
<protein>
    <recommendedName>
        <fullName>Lysis protein for colicin E1*</fullName>
    </recommendedName>
</protein>
<comment type="function">
    <text>Lysis proteins are required for both colicin release and partial cell lysis.</text>
</comment>
<comment type="subcellular location">
    <subcellularLocation>
        <location evidence="2">Cell outer membrane</location>
        <topology evidence="1">Lipid-anchor</topology>
    </subcellularLocation>
</comment>
<reference key="1">
    <citation type="journal article" date="1986" name="J. Gen. Appl. Microbiol.">
        <title>The nucleotide sequence of cea and the region of origin of plasmid pKY-1.</title>
        <authorList>
            <person name="Higashi M."/>
            <person name="Hata M."/>
            <person name="Hase T."/>
            <person name="Yamaguchi K."/>
            <person name="Masamune Y."/>
        </authorList>
    </citation>
    <scope>NUCLEOTIDE SEQUENCE [GENOMIC DNA]</scope>
</reference>
<gene>
    <name type="primary">kil</name>
</gene>